<reference key="1">
    <citation type="journal article" date="2004" name="PLoS Biol.">
        <title>Phylogenomics of the reproductive parasite Wolbachia pipientis wMel: a streamlined genome overrun by mobile genetic elements.</title>
        <authorList>
            <person name="Wu M."/>
            <person name="Sun L.V."/>
            <person name="Vamathevan J.J."/>
            <person name="Riegler M."/>
            <person name="DeBoy R.T."/>
            <person name="Brownlie J.C."/>
            <person name="McGraw E.A."/>
            <person name="Martin W."/>
            <person name="Esser C."/>
            <person name="Ahmadinejad N."/>
            <person name="Wiegand C."/>
            <person name="Madupu R."/>
            <person name="Beanan M.J."/>
            <person name="Brinkac L.M."/>
            <person name="Daugherty S.C."/>
            <person name="Durkin A.S."/>
            <person name="Kolonay J.F."/>
            <person name="Nelson W.C."/>
            <person name="Mohamoud Y."/>
            <person name="Lee P."/>
            <person name="Berry K.J."/>
            <person name="Young M.B."/>
            <person name="Utterback T.R."/>
            <person name="Weidman J.F."/>
            <person name="Nierman W.C."/>
            <person name="Paulsen I.T."/>
            <person name="Nelson K.E."/>
            <person name="Tettelin H."/>
            <person name="O'Neill S.L."/>
            <person name="Eisen J.A."/>
        </authorList>
    </citation>
    <scope>NUCLEOTIDE SEQUENCE [LARGE SCALE GENOMIC DNA]</scope>
</reference>
<keyword id="KW-0687">Ribonucleoprotein</keyword>
<keyword id="KW-0689">Ribosomal protein</keyword>
<keyword id="KW-0694">RNA-binding</keyword>
<keyword id="KW-0699">rRNA-binding</keyword>
<keyword id="KW-0820">tRNA-binding</keyword>
<comment type="function">
    <text evidence="1">One of the primary rRNA binding proteins, it binds directly to 16S rRNA where it nucleates assembly of the head domain of the 30S subunit. Is located at the subunit interface close to the decoding center, probably blocks exit of the E-site tRNA.</text>
</comment>
<comment type="subunit">
    <text evidence="1">Part of the 30S ribosomal subunit. Contacts proteins S9 and S11.</text>
</comment>
<comment type="similarity">
    <text evidence="1">Belongs to the universal ribosomal protein uS7 family.</text>
</comment>
<gene>
    <name evidence="1" type="primary">rpsG</name>
    <name type="ordered locus">WD_0015</name>
</gene>
<dbReference type="EMBL" id="AE017196">
    <property type="protein sequence ID" value="AAS13782.1"/>
    <property type="molecule type" value="Genomic_DNA"/>
</dbReference>
<dbReference type="RefSeq" id="WP_007549313.1">
    <property type="nucleotide sequence ID" value="NZ_OX384529.1"/>
</dbReference>
<dbReference type="SMR" id="Q73IX8"/>
<dbReference type="EnsemblBacteria" id="AAS13782">
    <property type="protein sequence ID" value="AAS13782"/>
    <property type="gene ID" value="WD_0015"/>
</dbReference>
<dbReference type="GeneID" id="70035510"/>
<dbReference type="KEGG" id="wol:WD_0015"/>
<dbReference type="eggNOG" id="COG0049">
    <property type="taxonomic scope" value="Bacteria"/>
</dbReference>
<dbReference type="Proteomes" id="UP000008215">
    <property type="component" value="Chromosome"/>
</dbReference>
<dbReference type="GO" id="GO:0015935">
    <property type="term" value="C:small ribosomal subunit"/>
    <property type="evidence" value="ECO:0007669"/>
    <property type="project" value="InterPro"/>
</dbReference>
<dbReference type="GO" id="GO:0019843">
    <property type="term" value="F:rRNA binding"/>
    <property type="evidence" value="ECO:0007669"/>
    <property type="project" value="UniProtKB-UniRule"/>
</dbReference>
<dbReference type="GO" id="GO:0003735">
    <property type="term" value="F:structural constituent of ribosome"/>
    <property type="evidence" value="ECO:0007669"/>
    <property type="project" value="InterPro"/>
</dbReference>
<dbReference type="GO" id="GO:0000049">
    <property type="term" value="F:tRNA binding"/>
    <property type="evidence" value="ECO:0007669"/>
    <property type="project" value="UniProtKB-UniRule"/>
</dbReference>
<dbReference type="GO" id="GO:0006412">
    <property type="term" value="P:translation"/>
    <property type="evidence" value="ECO:0007669"/>
    <property type="project" value="UniProtKB-UniRule"/>
</dbReference>
<dbReference type="CDD" id="cd14869">
    <property type="entry name" value="uS7_Bacteria"/>
    <property type="match status" value="1"/>
</dbReference>
<dbReference type="FunFam" id="1.10.455.10:FF:000001">
    <property type="entry name" value="30S ribosomal protein S7"/>
    <property type="match status" value="1"/>
</dbReference>
<dbReference type="Gene3D" id="1.10.455.10">
    <property type="entry name" value="Ribosomal protein S7 domain"/>
    <property type="match status" value="1"/>
</dbReference>
<dbReference type="HAMAP" id="MF_00480_B">
    <property type="entry name" value="Ribosomal_uS7_B"/>
    <property type="match status" value="1"/>
</dbReference>
<dbReference type="InterPro" id="IPR000235">
    <property type="entry name" value="Ribosomal_uS7"/>
</dbReference>
<dbReference type="InterPro" id="IPR005717">
    <property type="entry name" value="Ribosomal_uS7_bac/org-type"/>
</dbReference>
<dbReference type="InterPro" id="IPR020606">
    <property type="entry name" value="Ribosomal_uS7_CS"/>
</dbReference>
<dbReference type="InterPro" id="IPR023798">
    <property type="entry name" value="Ribosomal_uS7_dom"/>
</dbReference>
<dbReference type="InterPro" id="IPR036823">
    <property type="entry name" value="Ribosomal_uS7_dom_sf"/>
</dbReference>
<dbReference type="NCBIfam" id="TIGR01029">
    <property type="entry name" value="rpsG_bact"/>
    <property type="match status" value="1"/>
</dbReference>
<dbReference type="PANTHER" id="PTHR11205">
    <property type="entry name" value="RIBOSOMAL PROTEIN S7"/>
    <property type="match status" value="1"/>
</dbReference>
<dbReference type="Pfam" id="PF00177">
    <property type="entry name" value="Ribosomal_S7"/>
    <property type="match status" value="1"/>
</dbReference>
<dbReference type="PIRSF" id="PIRSF002122">
    <property type="entry name" value="RPS7p_RPS7a_RPS5e_RPS7o"/>
    <property type="match status" value="1"/>
</dbReference>
<dbReference type="SUPFAM" id="SSF47973">
    <property type="entry name" value="Ribosomal protein S7"/>
    <property type="match status" value="1"/>
</dbReference>
<dbReference type="PROSITE" id="PS00052">
    <property type="entry name" value="RIBOSOMAL_S7"/>
    <property type="match status" value="1"/>
</dbReference>
<sequence>MARRNKAKKREISPDSRYGSVLLMRFINTIMKCGKKSTAEKIIYDALSLAEKKIGEGGLSIFETAVGNVTPSIEVRSRRIGGATYQVPVEVRQDRAVSLALRWIAKATSAARKKSGKTTVDCLQSEILDAYNKRGGAFKMCEEKYKMAEANKAFSHLRF</sequence>
<protein>
    <recommendedName>
        <fullName evidence="1">Small ribosomal subunit protein uS7</fullName>
    </recommendedName>
    <alternativeName>
        <fullName evidence="2">30S ribosomal protein S7</fullName>
    </alternativeName>
</protein>
<name>RS7_WOLPM</name>
<proteinExistence type="inferred from homology"/>
<organism>
    <name type="scientific">Wolbachia pipientis wMel</name>
    <dbReference type="NCBI Taxonomy" id="163164"/>
    <lineage>
        <taxon>Bacteria</taxon>
        <taxon>Pseudomonadati</taxon>
        <taxon>Pseudomonadota</taxon>
        <taxon>Alphaproteobacteria</taxon>
        <taxon>Rickettsiales</taxon>
        <taxon>Anaplasmataceae</taxon>
        <taxon>Wolbachieae</taxon>
        <taxon>Wolbachia</taxon>
    </lineage>
</organism>
<feature type="chain" id="PRO_0000124382" description="Small ribosomal subunit protein uS7">
    <location>
        <begin position="1"/>
        <end position="159"/>
    </location>
</feature>
<evidence type="ECO:0000255" key="1">
    <source>
        <dbReference type="HAMAP-Rule" id="MF_00480"/>
    </source>
</evidence>
<evidence type="ECO:0000305" key="2"/>
<accession>Q73IX8</accession>